<keyword id="KW-1185">Reference proteome</keyword>
<reference key="1">
    <citation type="submission" date="1997-04" db="EMBL/GenBank/DDBJ databases">
        <authorList>
            <person name="Denizot F."/>
        </authorList>
    </citation>
    <scope>NUCLEOTIDE SEQUENCE [GENOMIC DNA]</scope>
    <source>
        <strain>168</strain>
    </source>
</reference>
<reference key="2">
    <citation type="journal article" date="1997" name="Nature">
        <title>The complete genome sequence of the Gram-positive bacterium Bacillus subtilis.</title>
        <authorList>
            <person name="Kunst F."/>
            <person name="Ogasawara N."/>
            <person name="Moszer I."/>
            <person name="Albertini A.M."/>
            <person name="Alloni G."/>
            <person name="Azevedo V."/>
            <person name="Bertero M.G."/>
            <person name="Bessieres P."/>
            <person name="Bolotin A."/>
            <person name="Borchert S."/>
            <person name="Borriss R."/>
            <person name="Boursier L."/>
            <person name="Brans A."/>
            <person name="Braun M."/>
            <person name="Brignell S.C."/>
            <person name="Bron S."/>
            <person name="Brouillet S."/>
            <person name="Bruschi C.V."/>
            <person name="Caldwell B."/>
            <person name="Capuano V."/>
            <person name="Carter N.M."/>
            <person name="Choi S.-K."/>
            <person name="Codani J.-J."/>
            <person name="Connerton I.F."/>
            <person name="Cummings N.J."/>
            <person name="Daniel R.A."/>
            <person name="Denizot F."/>
            <person name="Devine K.M."/>
            <person name="Duesterhoeft A."/>
            <person name="Ehrlich S.D."/>
            <person name="Emmerson P.T."/>
            <person name="Entian K.-D."/>
            <person name="Errington J."/>
            <person name="Fabret C."/>
            <person name="Ferrari E."/>
            <person name="Foulger D."/>
            <person name="Fritz C."/>
            <person name="Fujita M."/>
            <person name="Fujita Y."/>
            <person name="Fuma S."/>
            <person name="Galizzi A."/>
            <person name="Galleron N."/>
            <person name="Ghim S.-Y."/>
            <person name="Glaser P."/>
            <person name="Goffeau A."/>
            <person name="Golightly E.J."/>
            <person name="Grandi G."/>
            <person name="Guiseppi G."/>
            <person name="Guy B.J."/>
            <person name="Haga K."/>
            <person name="Haiech J."/>
            <person name="Harwood C.R."/>
            <person name="Henaut A."/>
            <person name="Hilbert H."/>
            <person name="Holsappel S."/>
            <person name="Hosono S."/>
            <person name="Hullo M.-F."/>
            <person name="Itaya M."/>
            <person name="Jones L.-M."/>
            <person name="Joris B."/>
            <person name="Karamata D."/>
            <person name="Kasahara Y."/>
            <person name="Klaerr-Blanchard M."/>
            <person name="Klein C."/>
            <person name="Kobayashi Y."/>
            <person name="Koetter P."/>
            <person name="Koningstein G."/>
            <person name="Krogh S."/>
            <person name="Kumano M."/>
            <person name="Kurita K."/>
            <person name="Lapidus A."/>
            <person name="Lardinois S."/>
            <person name="Lauber J."/>
            <person name="Lazarevic V."/>
            <person name="Lee S.-M."/>
            <person name="Levine A."/>
            <person name="Liu H."/>
            <person name="Masuda S."/>
            <person name="Mauel C."/>
            <person name="Medigue C."/>
            <person name="Medina N."/>
            <person name="Mellado R.P."/>
            <person name="Mizuno M."/>
            <person name="Moestl D."/>
            <person name="Nakai S."/>
            <person name="Noback M."/>
            <person name="Noone D."/>
            <person name="O'Reilly M."/>
            <person name="Ogawa K."/>
            <person name="Ogiwara A."/>
            <person name="Oudega B."/>
            <person name="Park S.-H."/>
            <person name="Parro V."/>
            <person name="Pohl T.M."/>
            <person name="Portetelle D."/>
            <person name="Porwollik S."/>
            <person name="Prescott A.M."/>
            <person name="Presecan E."/>
            <person name="Pujic P."/>
            <person name="Purnelle B."/>
            <person name="Rapoport G."/>
            <person name="Rey M."/>
            <person name="Reynolds S."/>
            <person name="Rieger M."/>
            <person name="Rivolta C."/>
            <person name="Rocha E."/>
            <person name="Roche B."/>
            <person name="Rose M."/>
            <person name="Sadaie Y."/>
            <person name="Sato T."/>
            <person name="Scanlan E."/>
            <person name="Schleich S."/>
            <person name="Schroeter R."/>
            <person name="Scoffone F."/>
            <person name="Sekiguchi J."/>
            <person name="Sekowska A."/>
            <person name="Seror S.J."/>
            <person name="Serror P."/>
            <person name="Shin B.-S."/>
            <person name="Soldo B."/>
            <person name="Sorokin A."/>
            <person name="Tacconi E."/>
            <person name="Takagi T."/>
            <person name="Takahashi H."/>
            <person name="Takemaru K."/>
            <person name="Takeuchi M."/>
            <person name="Tamakoshi A."/>
            <person name="Tanaka T."/>
            <person name="Terpstra P."/>
            <person name="Tognoni A."/>
            <person name="Tosato V."/>
            <person name="Uchiyama S."/>
            <person name="Vandenbol M."/>
            <person name="Vannier F."/>
            <person name="Vassarotti A."/>
            <person name="Viari A."/>
            <person name="Wambutt R."/>
            <person name="Wedler E."/>
            <person name="Wedler H."/>
            <person name="Weitzenegger T."/>
            <person name="Winters P."/>
            <person name="Wipat A."/>
            <person name="Yamamoto H."/>
            <person name="Yamane K."/>
            <person name="Yasumoto K."/>
            <person name="Yata K."/>
            <person name="Yoshida K."/>
            <person name="Yoshikawa H.-F."/>
            <person name="Zumstein E."/>
            <person name="Yoshikawa H."/>
            <person name="Danchin A."/>
        </authorList>
    </citation>
    <scope>NUCLEOTIDE SEQUENCE [LARGE SCALE GENOMIC DNA]</scope>
    <source>
        <strain>168</strain>
    </source>
</reference>
<reference key="3">
    <citation type="journal article" date="2009" name="J. Bacteriol.">
        <title>A widely conserved gene cluster required for lactate utilization in Bacillus subtilis and its involvement in biofilm formation.</title>
        <authorList>
            <person name="Chai Y."/>
            <person name="Kolter R."/>
            <person name="Losick R."/>
        </authorList>
    </citation>
    <scope>FUNCTION IN LACTATE UTILIZATION</scope>
    <scope>INDUCTION</scope>
    <scope>DISRUPTION PHENOTYPE</scope>
    <source>
        <strain>3610</strain>
    </source>
</reference>
<feature type="chain" id="PRO_0000384045" description="Lactate utilization protein A">
    <location>
        <begin position="1"/>
        <end position="238"/>
    </location>
</feature>
<proteinExistence type="evidence at protein level"/>
<organism>
    <name type="scientific">Bacillus subtilis (strain 168)</name>
    <dbReference type="NCBI Taxonomy" id="224308"/>
    <lineage>
        <taxon>Bacteria</taxon>
        <taxon>Bacillati</taxon>
        <taxon>Bacillota</taxon>
        <taxon>Bacilli</taxon>
        <taxon>Bacillales</taxon>
        <taxon>Bacillaceae</taxon>
        <taxon>Bacillus</taxon>
    </lineage>
</organism>
<accession>O07020</accession>
<accession>Q795K4</accession>
<dbReference type="EMBL" id="Z94043">
    <property type="protein sequence ID" value="CAB07992.1"/>
    <property type="molecule type" value="Genomic_DNA"/>
</dbReference>
<dbReference type="EMBL" id="AL009126">
    <property type="protein sequence ID" value="CAB15410.1"/>
    <property type="molecule type" value="Genomic_DNA"/>
</dbReference>
<dbReference type="PIR" id="E70039">
    <property type="entry name" value="E70039"/>
</dbReference>
<dbReference type="RefSeq" id="NP_391285.1">
    <property type="nucleotide sequence ID" value="NC_000964.3"/>
</dbReference>
<dbReference type="RefSeq" id="WP_003244353.1">
    <property type="nucleotide sequence ID" value="NZ_OZ025638.1"/>
</dbReference>
<dbReference type="SMR" id="O07020"/>
<dbReference type="FunCoup" id="O07020">
    <property type="interactions" value="90"/>
</dbReference>
<dbReference type="STRING" id="224308.BSU34050"/>
<dbReference type="jPOST" id="O07020"/>
<dbReference type="PaxDb" id="224308-BSU34050"/>
<dbReference type="EnsemblBacteria" id="CAB15410">
    <property type="protein sequence ID" value="CAB15410"/>
    <property type="gene ID" value="BSU_34050"/>
</dbReference>
<dbReference type="GeneID" id="936297"/>
<dbReference type="KEGG" id="bsu:BSU34050"/>
<dbReference type="PATRIC" id="fig|224308.179.peg.3691"/>
<dbReference type="eggNOG" id="COG0247">
    <property type="taxonomic scope" value="Bacteria"/>
</dbReference>
<dbReference type="InParanoid" id="O07020"/>
<dbReference type="OrthoDB" id="9770306at2"/>
<dbReference type="PhylomeDB" id="O07020"/>
<dbReference type="BioCyc" id="BSUB:BSU34050-MONOMER"/>
<dbReference type="BioCyc" id="MetaCyc:BSU34050-MONOMER"/>
<dbReference type="Proteomes" id="UP000001570">
    <property type="component" value="Chromosome"/>
</dbReference>
<dbReference type="GO" id="GO:0005829">
    <property type="term" value="C:cytosol"/>
    <property type="evidence" value="ECO:0000318"/>
    <property type="project" value="GO_Central"/>
</dbReference>
<dbReference type="GO" id="GO:0016491">
    <property type="term" value="F:oxidoreductase activity"/>
    <property type="evidence" value="ECO:0007669"/>
    <property type="project" value="UniProtKB-ARBA"/>
</dbReference>
<dbReference type="GO" id="GO:0006089">
    <property type="term" value="P:lactate metabolic process"/>
    <property type="evidence" value="ECO:0007669"/>
    <property type="project" value="UniProtKB-UniRule"/>
</dbReference>
<dbReference type="HAMAP" id="MF_02105">
    <property type="entry name" value="LutA"/>
    <property type="match status" value="1"/>
</dbReference>
<dbReference type="InterPro" id="IPR004017">
    <property type="entry name" value="Cys_rich_dom"/>
</dbReference>
<dbReference type="InterPro" id="IPR022822">
    <property type="entry name" value="LutA"/>
</dbReference>
<dbReference type="PANTHER" id="PTHR30296:SF0">
    <property type="entry name" value="LACTATE UTILIZATION PROTEIN A"/>
    <property type="match status" value="1"/>
</dbReference>
<dbReference type="PANTHER" id="PTHR30296">
    <property type="entry name" value="UNCHARACTERIZED PROTEIN YKGE"/>
    <property type="match status" value="1"/>
</dbReference>
<dbReference type="Pfam" id="PF02754">
    <property type="entry name" value="CCG"/>
    <property type="match status" value="2"/>
</dbReference>
<comment type="function">
    <text evidence="1">Is essential for L-lactate degradation and allows cells to grow with lactate as the sole carbon source. May also allow cells to utilize an alternative carbon source during biofilm formation, since it contributes to the formation of architecturally complex communities when lactate is present.</text>
</comment>
<comment type="induction">
    <text evidence="1">Is under the dual control of the transcriptional repressors LutR and SinR, which allows the lutABC operon to be induced during both growth in liquid culture and biofilm formation. Is induced by L-lactate, which relieves LutR repression.</text>
</comment>
<comment type="disruption phenotype">
    <text evidence="1">Cells lacking this gene are unable to grow on minimal medium with L-lactate as the sole carbon source. Cells lacking the lutABC operon exhibit little or no defect in biofilm formation on MSgg medium, but form small colonies that almost completely lacked surface architecture when glycerol is replaced with L-lactate in the MSgg medium.</text>
</comment>
<comment type="similarity">
    <text evidence="2">Belongs to the LutA/YkgE family.</text>
</comment>
<protein>
    <recommendedName>
        <fullName>Lactate utilization protein A</fullName>
    </recommendedName>
</protein>
<gene>
    <name type="primary">lutA</name>
    <name type="synonym">yvfV</name>
    <name type="ordered locus">BSU34050</name>
</gene>
<evidence type="ECO:0000269" key="1">
    <source>
    </source>
</evidence>
<evidence type="ECO:0000305" key="2"/>
<name>LUTA_BACSU</name>
<sequence>MKVSLFVTCLVDMFQTNVGKATVELLERLGCEVDFPEGQICCGQPAYNSGYVHDAKKAMKRMIETFQDSEYVVSPSGSCTTMFREYPHLFQDDPKWADKAKKLADKTYELTDFIVNVLGVEDVGATLHTKATLHTSCHMTRLLGVRKEPMKLLSHVKGLQFTELPGKHNCCGFGGTFSVKMAQISEQMVDEKVECVEETGAEVLIGADCGCLMNIGGRLGRKDKNVKVMHIAEVLNSR</sequence>